<evidence type="ECO:0000255" key="1">
    <source>
        <dbReference type="HAMAP-Rule" id="MF_01075"/>
    </source>
</evidence>
<reference key="1">
    <citation type="journal article" date="2009" name="PLoS Genet.">
        <title>Organised genome dynamics in the Escherichia coli species results in highly diverse adaptive paths.</title>
        <authorList>
            <person name="Touchon M."/>
            <person name="Hoede C."/>
            <person name="Tenaillon O."/>
            <person name="Barbe V."/>
            <person name="Baeriswyl S."/>
            <person name="Bidet P."/>
            <person name="Bingen E."/>
            <person name="Bonacorsi S."/>
            <person name="Bouchier C."/>
            <person name="Bouvet O."/>
            <person name="Calteau A."/>
            <person name="Chiapello H."/>
            <person name="Clermont O."/>
            <person name="Cruveiller S."/>
            <person name="Danchin A."/>
            <person name="Diard M."/>
            <person name="Dossat C."/>
            <person name="Karoui M.E."/>
            <person name="Frapy E."/>
            <person name="Garry L."/>
            <person name="Ghigo J.M."/>
            <person name="Gilles A.M."/>
            <person name="Johnson J."/>
            <person name="Le Bouguenec C."/>
            <person name="Lescat M."/>
            <person name="Mangenot S."/>
            <person name="Martinez-Jehanne V."/>
            <person name="Matic I."/>
            <person name="Nassif X."/>
            <person name="Oztas S."/>
            <person name="Petit M.A."/>
            <person name="Pichon C."/>
            <person name="Rouy Z."/>
            <person name="Ruf C.S."/>
            <person name="Schneider D."/>
            <person name="Tourret J."/>
            <person name="Vacherie B."/>
            <person name="Vallenet D."/>
            <person name="Medigue C."/>
            <person name="Rocha E.P.C."/>
            <person name="Denamur E."/>
        </authorList>
    </citation>
    <scope>NUCLEOTIDE SEQUENCE [LARGE SCALE GENOMIC DNA]</scope>
    <source>
        <strain>ATCC 35469 / DSM 13698 / BCRC 15582 / CCUG 18766 / IAM 14443 / JCM 21226 / LMG 7866 / NBRC 102419 / NCTC 12128 / CDC 0568-73</strain>
    </source>
</reference>
<sequence>MDATTIISLFILGSVLVTCSILLSSFSSRLGIPILVIFLAIGMLAGVDGVGGIPFDNYPFAYMVSNLALAVILLDGGMRTQASSFRVALGPALSLATVGVLITSGLTGMMAAWLFNLDLIEGLLIGAIVGSTDAAAVFSLLGGKGLNERVGSTLEIESGSNDPMAVFLTITLIEMIQHHETGVSWTFALDILQQFGLGILLGLGGGYLLQQMINRIALPAGLYPMLALSGGILIFALTTALEGSGILAVYLCGFLLGNRPIRNRYGILQNFDGLAWLAQIAMFLVLGLLVNPSDLLPIAIPALLLSAWMIFFARPLSVFAGLLPFRGFNLRERIFISWVGLRGAVPIILAVFPMMAGLDNSRLFFNVAFFVVLISLLFQGTSLSWAAKKAKVVVPAVGWPVSRVGLDIHPENPWEQFVYQLSADKWCVGAALRDLHMPKDTRIAALFRDNVLLHPSGSTRLREGDVLCVIGRERDLPALGKLFSQSPPVALDQRFFGDFILEGSAKFADVAIIYGLDAGTEYRDKQQTLGEIVQQLLGAAPVVGDQVEFAGMIWTVAEKEDNQVMKVGVRVADEIAE</sequence>
<comment type="function">
    <text evidence="1">K(+)/H(+) antiporter that extrudes potassium in exchange for external protons and maintains the internal concentration of potassium under toxic levels.</text>
</comment>
<comment type="catalytic activity">
    <reaction evidence="1">
        <text>K(+)(in) + H(+)(out) = K(+)(out) + H(+)(in)</text>
        <dbReference type="Rhea" id="RHEA:29467"/>
        <dbReference type="ChEBI" id="CHEBI:15378"/>
        <dbReference type="ChEBI" id="CHEBI:29103"/>
    </reaction>
    <physiologicalReaction direction="left-to-right" evidence="1">
        <dbReference type="Rhea" id="RHEA:29468"/>
    </physiologicalReaction>
</comment>
<comment type="subcellular location">
    <subcellularLocation>
        <location evidence="1">Cell inner membrane</location>
        <topology evidence="1">Multi-pass membrane protein</topology>
    </subcellularLocation>
</comment>
<comment type="similarity">
    <text evidence="1">Belongs to the monovalent cation:proton antiporter 1 (CPA1) transporter (TC 2.A.36) family. NhaP2 subfamily.</text>
</comment>
<gene>
    <name evidence="1" type="primary">nhaP2</name>
    <name type="synonym">cvrA</name>
    <name type="ordered locus">EFER_1764</name>
</gene>
<keyword id="KW-0050">Antiport</keyword>
<keyword id="KW-0997">Cell inner membrane</keyword>
<keyword id="KW-1003">Cell membrane</keyword>
<keyword id="KW-0406">Ion transport</keyword>
<keyword id="KW-0472">Membrane</keyword>
<keyword id="KW-0630">Potassium</keyword>
<keyword id="KW-0633">Potassium transport</keyword>
<keyword id="KW-0812">Transmembrane</keyword>
<keyword id="KW-1133">Transmembrane helix</keyword>
<keyword id="KW-0813">Transport</keyword>
<name>NHAP2_ESCF3</name>
<feature type="chain" id="PRO_1000136706" description="K(+)/H(+) antiporter NhaP2">
    <location>
        <begin position="1"/>
        <end position="577"/>
    </location>
</feature>
<feature type="transmembrane region" description="Helical" evidence="1">
    <location>
        <begin position="6"/>
        <end position="26"/>
    </location>
</feature>
<feature type="transmembrane region" description="Helical" evidence="1">
    <location>
        <begin position="30"/>
        <end position="50"/>
    </location>
</feature>
<feature type="transmembrane region" description="Helical" evidence="1">
    <location>
        <begin position="58"/>
        <end position="78"/>
    </location>
</feature>
<feature type="transmembrane region" description="Helical" evidence="1">
    <location>
        <begin position="87"/>
        <end position="107"/>
    </location>
</feature>
<feature type="transmembrane region" description="Helical" evidence="1">
    <location>
        <begin position="109"/>
        <end position="129"/>
    </location>
</feature>
<feature type="transmembrane region" description="Helical" evidence="1">
    <location>
        <begin position="163"/>
        <end position="183"/>
    </location>
</feature>
<feature type="transmembrane region" description="Helical" evidence="1">
    <location>
        <begin position="189"/>
        <end position="209"/>
    </location>
</feature>
<feature type="transmembrane region" description="Helical" evidence="1">
    <location>
        <begin position="216"/>
        <end position="236"/>
    </location>
</feature>
<feature type="transmembrane region" description="Helical" evidence="1">
    <location>
        <begin position="237"/>
        <end position="257"/>
    </location>
</feature>
<feature type="transmembrane region" description="Helical" evidence="1">
    <location>
        <begin position="270"/>
        <end position="290"/>
    </location>
</feature>
<feature type="transmembrane region" description="Helical" evidence="1">
    <location>
        <begin position="293"/>
        <end position="313"/>
    </location>
</feature>
<feature type="transmembrane region" description="Helical" evidence="1">
    <location>
        <begin position="334"/>
        <end position="354"/>
    </location>
</feature>
<feature type="transmembrane region" description="Helical" evidence="1">
    <location>
        <begin position="363"/>
        <end position="383"/>
    </location>
</feature>
<feature type="domain" description="RCK C-terminal" evidence="1">
    <location>
        <begin position="403"/>
        <end position="485"/>
    </location>
</feature>
<protein>
    <recommendedName>
        <fullName evidence="1">K(+)/H(+) antiporter NhaP2</fullName>
    </recommendedName>
    <alternativeName>
        <fullName evidence="1">Potassium/proton antiporter NhaP2</fullName>
    </alternativeName>
</protein>
<accession>B7LSJ3</accession>
<proteinExistence type="inferred from homology"/>
<organism>
    <name type="scientific">Escherichia fergusonii (strain ATCC 35469 / DSM 13698 / CCUG 18766 / IAM 14443 / JCM 21226 / LMG 7866 / NBRC 102419 / NCTC 12128 / CDC 0568-73)</name>
    <dbReference type="NCBI Taxonomy" id="585054"/>
    <lineage>
        <taxon>Bacteria</taxon>
        <taxon>Pseudomonadati</taxon>
        <taxon>Pseudomonadota</taxon>
        <taxon>Gammaproteobacteria</taxon>
        <taxon>Enterobacterales</taxon>
        <taxon>Enterobacteriaceae</taxon>
        <taxon>Escherichia</taxon>
    </lineage>
</organism>
<dbReference type="EMBL" id="CU928158">
    <property type="protein sequence ID" value="CAQ89279.1"/>
    <property type="molecule type" value="Genomic_DNA"/>
</dbReference>
<dbReference type="RefSeq" id="WP_000340219.1">
    <property type="nucleotide sequence ID" value="NC_011740.1"/>
</dbReference>
<dbReference type="SMR" id="B7LSJ3"/>
<dbReference type="KEGG" id="efe:EFER_1764"/>
<dbReference type="HOGENOM" id="CLU_005912_9_2_6"/>
<dbReference type="OrthoDB" id="9810759at2"/>
<dbReference type="Proteomes" id="UP000000745">
    <property type="component" value="Chromosome"/>
</dbReference>
<dbReference type="GO" id="GO:0005886">
    <property type="term" value="C:plasma membrane"/>
    <property type="evidence" value="ECO:0007669"/>
    <property type="project" value="UniProtKB-SubCell"/>
</dbReference>
<dbReference type="GO" id="GO:0050660">
    <property type="term" value="F:flavin adenine dinucleotide binding"/>
    <property type="evidence" value="ECO:0007669"/>
    <property type="project" value="InterPro"/>
</dbReference>
<dbReference type="GO" id="GO:0015386">
    <property type="term" value="F:potassium:proton antiporter activity"/>
    <property type="evidence" value="ECO:0007669"/>
    <property type="project" value="UniProtKB-UniRule"/>
</dbReference>
<dbReference type="GO" id="GO:0006884">
    <property type="term" value="P:cell volume homeostasis"/>
    <property type="evidence" value="ECO:0007669"/>
    <property type="project" value="InterPro"/>
</dbReference>
<dbReference type="FunFam" id="1.20.1530.20:FF:000002">
    <property type="entry name" value="K(+)/H(+) antiporter NhaP2"/>
    <property type="match status" value="1"/>
</dbReference>
<dbReference type="Gene3D" id="1.20.1530.20">
    <property type="match status" value="1"/>
</dbReference>
<dbReference type="Gene3D" id="3.30.465.10">
    <property type="match status" value="1"/>
</dbReference>
<dbReference type="Gene3D" id="3.30.70.1450">
    <property type="entry name" value="Regulator of K+ conductance, C-terminal domain"/>
    <property type="match status" value="1"/>
</dbReference>
<dbReference type="HAMAP" id="MF_01075">
    <property type="entry name" value="NhaP2"/>
    <property type="match status" value="1"/>
</dbReference>
<dbReference type="InterPro" id="IPR006153">
    <property type="entry name" value="Cation/H_exchanger_TM"/>
</dbReference>
<dbReference type="InterPro" id="IPR036318">
    <property type="entry name" value="FAD-bd_PCMH-like_sf"/>
</dbReference>
<dbReference type="InterPro" id="IPR016169">
    <property type="entry name" value="FAD-bd_PCMH_sub2"/>
</dbReference>
<dbReference type="InterPro" id="IPR038770">
    <property type="entry name" value="Na+/solute_symporter_sf"/>
</dbReference>
<dbReference type="InterPro" id="IPR023729">
    <property type="entry name" value="NhaP2"/>
</dbReference>
<dbReference type="InterPro" id="IPR006037">
    <property type="entry name" value="RCK_C"/>
</dbReference>
<dbReference type="InterPro" id="IPR036721">
    <property type="entry name" value="RCK_C_sf"/>
</dbReference>
<dbReference type="InterPro" id="IPR005170">
    <property type="entry name" value="Transptr-assoc_dom"/>
</dbReference>
<dbReference type="NCBIfam" id="NF003714">
    <property type="entry name" value="PRK05326.1-1"/>
    <property type="match status" value="1"/>
</dbReference>
<dbReference type="NCBIfam" id="NF003715">
    <property type="entry name" value="PRK05326.1-2"/>
    <property type="match status" value="1"/>
</dbReference>
<dbReference type="NCBIfam" id="NF003716">
    <property type="entry name" value="PRK05326.1-3"/>
    <property type="match status" value="1"/>
</dbReference>
<dbReference type="PANTHER" id="PTHR32507:SF7">
    <property type="entry name" value="K(+)_H(+) ANTIPORTER NHAP2"/>
    <property type="match status" value="1"/>
</dbReference>
<dbReference type="PANTHER" id="PTHR32507">
    <property type="entry name" value="NA(+)/H(+) ANTIPORTER 1"/>
    <property type="match status" value="1"/>
</dbReference>
<dbReference type="Pfam" id="PF03471">
    <property type="entry name" value="CorC_HlyC"/>
    <property type="match status" value="1"/>
</dbReference>
<dbReference type="Pfam" id="PF00999">
    <property type="entry name" value="Na_H_Exchanger"/>
    <property type="match status" value="1"/>
</dbReference>
<dbReference type="Pfam" id="PF02080">
    <property type="entry name" value="TrkA_C"/>
    <property type="match status" value="1"/>
</dbReference>
<dbReference type="SMART" id="SM01091">
    <property type="entry name" value="CorC_HlyC"/>
    <property type="match status" value="1"/>
</dbReference>
<dbReference type="SUPFAM" id="SSF56176">
    <property type="entry name" value="FAD-binding/transporter-associated domain-like"/>
    <property type="match status" value="1"/>
</dbReference>
<dbReference type="SUPFAM" id="SSF116726">
    <property type="entry name" value="TrkA C-terminal domain-like"/>
    <property type="match status" value="1"/>
</dbReference>
<dbReference type="PROSITE" id="PS51202">
    <property type="entry name" value="RCK_C"/>
    <property type="match status" value="1"/>
</dbReference>